<organism>
    <name type="scientific">Dictyostelium discoideum</name>
    <name type="common">Social amoeba</name>
    <dbReference type="NCBI Taxonomy" id="44689"/>
    <lineage>
        <taxon>Eukaryota</taxon>
        <taxon>Amoebozoa</taxon>
        <taxon>Evosea</taxon>
        <taxon>Eumycetozoa</taxon>
        <taxon>Dictyostelia</taxon>
        <taxon>Dictyosteliales</taxon>
        <taxon>Dictyosteliaceae</taxon>
        <taxon>Dictyostelium</taxon>
    </lineage>
</organism>
<name>GTAB_DICDI</name>
<reference key="1">
    <citation type="journal article" date="2005" name="Nature">
        <title>The genome of the social amoeba Dictyostelium discoideum.</title>
        <authorList>
            <person name="Eichinger L."/>
            <person name="Pachebat J.A."/>
            <person name="Gloeckner G."/>
            <person name="Rajandream M.A."/>
            <person name="Sucgang R."/>
            <person name="Berriman M."/>
            <person name="Song J."/>
            <person name="Olsen R."/>
            <person name="Szafranski K."/>
            <person name="Xu Q."/>
            <person name="Tunggal B."/>
            <person name="Kummerfeld S."/>
            <person name="Madera M."/>
            <person name="Konfortov B.A."/>
            <person name="Rivero F."/>
            <person name="Bankier A.T."/>
            <person name="Lehmann R."/>
            <person name="Hamlin N."/>
            <person name="Davies R."/>
            <person name="Gaudet P."/>
            <person name="Fey P."/>
            <person name="Pilcher K."/>
            <person name="Chen G."/>
            <person name="Saunders D."/>
            <person name="Sodergren E.J."/>
            <person name="Davis P."/>
            <person name="Kerhornou A."/>
            <person name="Nie X."/>
            <person name="Hall N."/>
            <person name="Anjard C."/>
            <person name="Hemphill L."/>
            <person name="Bason N."/>
            <person name="Farbrother P."/>
            <person name="Desany B."/>
            <person name="Just E."/>
            <person name="Morio T."/>
            <person name="Rost R."/>
            <person name="Churcher C.M."/>
            <person name="Cooper J."/>
            <person name="Haydock S."/>
            <person name="van Driessche N."/>
            <person name="Cronin A."/>
            <person name="Goodhead I."/>
            <person name="Muzny D.M."/>
            <person name="Mourier T."/>
            <person name="Pain A."/>
            <person name="Lu M."/>
            <person name="Harper D."/>
            <person name="Lindsay R."/>
            <person name="Hauser H."/>
            <person name="James K.D."/>
            <person name="Quiles M."/>
            <person name="Madan Babu M."/>
            <person name="Saito T."/>
            <person name="Buchrieser C."/>
            <person name="Wardroper A."/>
            <person name="Felder M."/>
            <person name="Thangavelu M."/>
            <person name="Johnson D."/>
            <person name="Knights A."/>
            <person name="Loulseged H."/>
            <person name="Mungall K.L."/>
            <person name="Oliver K."/>
            <person name="Price C."/>
            <person name="Quail M.A."/>
            <person name="Urushihara H."/>
            <person name="Hernandez J."/>
            <person name="Rabbinowitsch E."/>
            <person name="Steffen D."/>
            <person name="Sanders M."/>
            <person name="Ma J."/>
            <person name="Kohara Y."/>
            <person name="Sharp S."/>
            <person name="Simmonds M.N."/>
            <person name="Spiegler S."/>
            <person name="Tivey A."/>
            <person name="Sugano S."/>
            <person name="White B."/>
            <person name="Walker D."/>
            <person name="Woodward J.R."/>
            <person name="Winckler T."/>
            <person name="Tanaka Y."/>
            <person name="Shaulsky G."/>
            <person name="Schleicher M."/>
            <person name="Weinstock G.M."/>
            <person name="Rosenthal A."/>
            <person name="Cox E.C."/>
            <person name="Chisholm R.L."/>
            <person name="Gibbs R.A."/>
            <person name="Loomis W.F."/>
            <person name="Platzer M."/>
            <person name="Kay R.R."/>
            <person name="Williams J.G."/>
            <person name="Dear P.H."/>
            <person name="Noegel A.A."/>
            <person name="Barrell B.G."/>
            <person name="Kuspa A."/>
        </authorList>
    </citation>
    <scope>NUCLEOTIDE SEQUENCE [LARGE SCALE GENOMIC DNA]</scope>
    <source>
        <strain>AX4</strain>
    </source>
</reference>
<reference key="2">
    <citation type="journal article" date="2003" name="Dev. Biol.">
        <title>A novel developmental mechanism in Dictyostelium revealed in a screen for communication mutants.</title>
        <authorList>
            <person name="Kibler K."/>
            <person name="Nguyen T.-L."/>
            <person name="Svetz J."/>
            <person name="Van Driessche N."/>
            <person name="Ibarra M."/>
            <person name="Thompson C."/>
            <person name="Shaw C."/>
            <person name="Shaulsky G."/>
        </authorList>
    </citation>
    <scope>GENE NAME</scope>
</reference>
<feature type="chain" id="PRO_0000330435" description="GATA zinc finger domain-containing protein 2">
    <location>
        <begin position="1"/>
        <end position="131"/>
    </location>
</feature>
<feature type="zinc finger region" description="GATA-type" evidence="1">
    <location>
        <begin position="88"/>
        <end position="115"/>
    </location>
</feature>
<feature type="region of interest" description="Disordered" evidence="2">
    <location>
        <begin position="21"/>
        <end position="85"/>
    </location>
</feature>
<feature type="compositionally biased region" description="Low complexity" evidence="2">
    <location>
        <begin position="21"/>
        <end position="55"/>
    </location>
</feature>
<feature type="compositionally biased region" description="Polar residues" evidence="2">
    <location>
        <begin position="57"/>
        <end position="74"/>
    </location>
</feature>
<gene>
    <name type="primary">comH</name>
    <name type="synonym">gtaB</name>
    <name type="ORF">DDB_G0280547</name>
</gene>
<proteinExistence type="predicted"/>
<protein>
    <recommendedName>
        <fullName>GATA zinc finger domain-containing protein 2</fullName>
    </recommendedName>
    <alternativeName>
        <fullName>Communication mutant protein H</fullName>
    </alternativeName>
</protein>
<keyword id="KW-0479">Metal-binding</keyword>
<keyword id="KW-1185">Reference proteome</keyword>
<keyword id="KW-0862">Zinc</keyword>
<keyword id="KW-0863">Zinc-finger</keyword>
<dbReference type="EMBL" id="AAFI02000037">
    <property type="protein sequence ID" value="EAL67075.1"/>
    <property type="molecule type" value="Genomic_DNA"/>
</dbReference>
<dbReference type="RefSeq" id="XP_641099.1">
    <property type="nucleotide sequence ID" value="XM_636007.1"/>
</dbReference>
<dbReference type="STRING" id="44689.Q54V32"/>
<dbReference type="PaxDb" id="44689-DDB0214839"/>
<dbReference type="EnsemblProtists" id="EAL67075">
    <property type="protein sequence ID" value="EAL67075"/>
    <property type="gene ID" value="DDB_G0280547"/>
</dbReference>
<dbReference type="GeneID" id="8622658"/>
<dbReference type="KEGG" id="ddi:DDB_G0280547"/>
<dbReference type="dictyBase" id="DDB_G0280547">
    <property type="gene designation" value="comH"/>
</dbReference>
<dbReference type="VEuPathDB" id="AmoebaDB:DDB_G0280547"/>
<dbReference type="HOGENOM" id="CLU_1931475_0_0_1"/>
<dbReference type="InParanoid" id="Q54V32"/>
<dbReference type="PRO" id="PR:Q54V32"/>
<dbReference type="Proteomes" id="UP000002195">
    <property type="component" value="Chromosome 3"/>
</dbReference>
<dbReference type="GO" id="GO:0043565">
    <property type="term" value="F:sequence-specific DNA binding"/>
    <property type="evidence" value="ECO:0007669"/>
    <property type="project" value="InterPro"/>
</dbReference>
<dbReference type="GO" id="GO:0008270">
    <property type="term" value="F:zinc ion binding"/>
    <property type="evidence" value="ECO:0007669"/>
    <property type="project" value="UniProtKB-KW"/>
</dbReference>
<dbReference type="GO" id="GO:0031152">
    <property type="term" value="P:aggregation involved in sorocarp development"/>
    <property type="evidence" value="ECO:0000270"/>
    <property type="project" value="dictyBase"/>
</dbReference>
<dbReference type="GO" id="GO:0031154">
    <property type="term" value="P:culmination involved in sorocarp development"/>
    <property type="evidence" value="ECO:0000315"/>
    <property type="project" value="dictyBase"/>
</dbReference>
<dbReference type="GO" id="GO:0006355">
    <property type="term" value="P:regulation of DNA-templated transcription"/>
    <property type="evidence" value="ECO:0007669"/>
    <property type="project" value="InterPro"/>
</dbReference>
<dbReference type="GO" id="GO:0030587">
    <property type="term" value="P:sorocarp development"/>
    <property type="evidence" value="ECO:0007001"/>
    <property type="project" value="dictyBase"/>
</dbReference>
<dbReference type="Gene3D" id="3.30.50.10">
    <property type="entry name" value="Erythroid Transcription Factor GATA-1, subunit A"/>
    <property type="match status" value="1"/>
</dbReference>
<dbReference type="InterPro" id="IPR000679">
    <property type="entry name" value="Znf_GATA"/>
</dbReference>
<dbReference type="InterPro" id="IPR013088">
    <property type="entry name" value="Znf_NHR/GATA"/>
</dbReference>
<dbReference type="Pfam" id="PF00320">
    <property type="entry name" value="GATA"/>
    <property type="match status" value="1"/>
</dbReference>
<dbReference type="SMART" id="SM00401">
    <property type="entry name" value="ZnF_GATA"/>
    <property type="match status" value="1"/>
</dbReference>
<dbReference type="SUPFAM" id="SSF57716">
    <property type="entry name" value="Glucocorticoid receptor-like (DNA-binding domain)"/>
    <property type="match status" value="1"/>
</dbReference>
<dbReference type="PROSITE" id="PS00344">
    <property type="entry name" value="GATA_ZN_FINGER_1"/>
    <property type="match status" value="1"/>
</dbReference>
<dbReference type="PROSITE" id="PS50114">
    <property type="entry name" value="GATA_ZN_FINGER_2"/>
    <property type="match status" value="1"/>
</dbReference>
<accession>Q54V32</accession>
<sequence length="131" mass="13676">MVKNSEHLPWYLGSDSATAASTATDATSADGAASETDAASATDTTSATDPTSATDPIATTNTTGITSSGPTTNGRRGRPYISTPPNRCYDCGRTRSPYWRKGTYNGQVVHLCNACGLNHIKIAKKSSAIFL</sequence>
<evidence type="ECO:0000255" key="1">
    <source>
        <dbReference type="PROSITE-ProRule" id="PRU00094"/>
    </source>
</evidence>
<evidence type="ECO:0000256" key="2">
    <source>
        <dbReference type="SAM" id="MobiDB-lite"/>
    </source>
</evidence>